<accession>P53681</accession>
<sequence>MGICVSKPSPEPDLHNHHTSIPVNDTSLPPQDNSIPPKDIAIPAQDNNKPPGKKSPFLPFYSPSPAHFLFSKKSPAVGSPAAGSSNSTPKRLFPFPPPSPAKHIKAAWARRHGSVKPNEAAIPENNEVDGGAGLDKSFGFSKKFGSKFEVGEEVGRGHFGYTCRAKFKKGEFKGQDVAVKVIPKAKMTTAIAIEDVRREVKILRALTGHNNLVQFYDAFEDHTNVYVVMELCEGGELLDRILSRGGKYTEDDAKAVMIQILNVVAFCHLQGVVHRDLKPENFLFKSKDEDSQLKAIDFGLSDYVKPDERLNDIVGSAYYVAPEVLHRSYSTEADVWSIGVISYILLCGSRPFWARTESGIFRAVLKANLSFDEPPWPSVSSEAKDFVKRLLNKDPRKRMTAAQALCHSWIKNSNDIKFPLDILVFKLMKVYMRSSPLRKAALRALSKTLTVDELFYLKEQFVLLEPTKNGTISLENIKQALMRNSTDAMKDSRVLDLLVSLNALQYRRMDFEEFCAAALSVHQLEALDRWEQHARCAYDLFEKDGNRAIMIEELASELGLGPSIPVHAVLHDWIRHTDGKLSFLGYVKLLHGVSTRAIAKAQ</sequence>
<gene>
    <name type="primary">CRK</name>
</gene>
<evidence type="ECO:0000255" key="1">
    <source>
        <dbReference type="PROSITE-ProRule" id="PRU00159"/>
    </source>
</evidence>
<evidence type="ECO:0000255" key="2">
    <source>
        <dbReference type="PROSITE-ProRule" id="PRU10027"/>
    </source>
</evidence>
<evidence type="ECO:0000256" key="3">
    <source>
        <dbReference type="SAM" id="MobiDB-lite"/>
    </source>
</evidence>
<evidence type="ECO:0000305" key="4"/>
<reference key="1">
    <citation type="journal article" date="1995" name="Plant Mol. Biol.">
        <title>A carrot cDNA encoding an atypical protein kinase homologous to plant calcium-dependent protein kinases.</title>
        <authorList>
            <person name="Lindzen E."/>
            <person name="Choi J.H."/>
        </authorList>
    </citation>
    <scope>NUCLEOTIDE SEQUENCE [MRNA]</scope>
    <source>
        <strain>cv. Juwarot</strain>
    </source>
</reference>
<name>CRK_DAUCA</name>
<comment type="catalytic activity">
    <reaction>
        <text>L-seryl-[protein] + ATP = O-phospho-L-seryl-[protein] + ADP + H(+)</text>
        <dbReference type="Rhea" id="RHEA:17989"/>
        <dbReference type="Rhea" id="RHEA-COMP:9863"/>
        <dbReference type="Rhea" id="RHEA-COMP:11604"/>
        <dbReference type="ChEBI" id="CHEBI:15378"/>
        <dbReference type="ChEBI" id="CHEBI:29999"/>
        <dbReference type="ChEBI" id="CHEBI:30616"/>
        <dbReference type="ChEBI" id="CHEBI:83421"/>
        <dbReference type="ChEBI" id="CHEBI:456216"/>
        <dbReference type="EC" id="2.7.11.1"/>
    </reaction>
</comment>
<comment type="catalytic activity">
    <reaction>
        <text>L-threonyl-[protein] + ATP = O-phospho-L-threonyl-[protein] + ADP + H(+)</text>
        <dbReference type="Rhea" id="RHEA:46608"/>
        <dbReference type="Rhea" id="RHEA-COMP:11060"/>
        <dbReference type="Rhea" id="RHEA-COMP:11605"/>
        <dbReference type="ChEBI" id="CHEBI:15378"/>
        <dbReference type="ChEBI" id="CHEBI:30013"/>
        <dbReference type="ChEBI" id="CHEBI:30616"/>
        <dbReference type="ChEBI" id="CHEBI:61977"/>
        <dbReference type="ChEBI" id="CHEBI:456216"/>
        <dbReference type="EC" id="2.7.11.1"/>
    </reaction>
</comment>
<comment type="domain">
    <text>All EF-hand domains seem to be non-functional.</text>
</comment>
<comment type="similarity">
    <text evidence="4">Belongs to the protein kinase superfamily. CAMK Ser/Thr protein kinase family. CaMK subfamily.</text>
</comment>
<keyword id="KW-0067">ATP-binding</keyword>
<keyword id="KW-0418">Kinase</keyword>
<keyword id="KW-0547">Nucleotide-binding</keyword>
<keyword id="KW-0677">Repeat</keyword>
<keyword id="KW-0723">Serine/threonine-protein kinase</keyword>
<keyword id="KW-0808">Transferase</keyword>
<proteinExistence type="evidence at transcript level"/>
<protein>
    <recommendedName>
        <fullName>CDPK-related protein kinase</fullName>
        <ecNumber>2.7.11.1</ecNumber>
    </recommendedName>
    <alternativeName>
        <fullName>PK421</fullName>
    </alternativeName>
</protein>
<dbReference type="EC" id="2.7.11.1"/>
<dbReference type="EMBL" id="X83869">
    <property type="protein sequence ID" value="CAA58750.1"/>
    <property type="molecule type" value="mRNA"/>
</dbReference>
<dbReference type="PIR" id="S60052">
    <property type="entry name" value="S60052"/>
</dbReference>
<dbReference type="SMR" id="P53681"/>
<dbReference type="BRENDA" id="2.7.11.1">
    <property type="organism ID" value="1841"/>
</dbReference>
<dbReference type="GO" id="GO:0005524">
    <property type="term" value="F:ATP binding"/>
    <property type="evidence" value="ECO:0007669"/>
    <property type="project" value="UniProtKB-KW"/>
</dbReference>
<dbReference type="GO" id="GO:0106310">
    <property type="term" value="F:protein serine kinase activity"/>
    <property type="evidence" value="ECO:0007669"/>
    <property type="project" value="RHEA"/>
</dbReference>
<dbReference type="GO" id="GO:0004674">
    <property type="term" value="F:protein serine/threonine kinase activity"/>
    <property type="evidence" value="ECO:0007669"/>
    <property type="project" value="UniProtKB-KW"/>
</dbReference>
<dbReference type="CDD" id="cd05117">
    <property type="entry name" value="STKc_CAMK"/>
    <property type="match status" value="1"/>
</dbReference>
<dbReference type="FunFam" id="1.10.510.10:FF:001864">
    <property type="entry name" value="Calcium-dependent protein kinase SK5"/>
    <property type="match status" value="1"/>
</dbReference>
<dbReference type="FunFam" id="1.10.238.10:FF:000085">
    <property type="entry name" value="CDPK-related kinase 1"/>
    <property type="match status" value="1"/>
</dbReference>
<dbReference type="FunFam" id="3.30.200.20:FF:000101">
    <property type="entry name" value="CDPK-related kinase 1"/>
    <property type="match status" value="1"/>
</dbReference>
<dbReference type="FunFam" id="1.10.510.10:FF:001294">
    <property type="entry name" value="CDPK-related kinase 3"/>
    <property type="match status" value="1"/>
</dbReference>
<dbReference type="Gene3D" id="1.10.238.10">
    <property type="entry name" value="EF-hand"/>
    <property type="match status" value="2"/>
</dbReference>
<dbReference type="Gene3D" id="3.30.200.20">
    <property type="entry name" value="Phosphorylase Kinase, domain 1"/>
    <property type="match status" value="1"/>
</dbReference>
<dbReference type="Gene3D" id="1.10.510.10">
    <property type="entry name" value="Transferase(Phosphotransferase) domain 1"/>
    <property type="match status" value="1"/>
</dbReference>
<dbReference type="InterPro" id="IPR050205">
    <property type="entry name" value="CDPK_Ser/Thr_kinases"/>
</dbReference>
<dbReference type="InterPro" id="IPR011992">
    <property type="entry name" value="EF-hand-dom_pair"/>
</dbReference>
<dbReference type="InterPro" id="IPR011009">
    <property type="entry name" value="Kinase-like_dom_sf"/>
</dbReference>
<dbReference type="InterPro" id="IPR000719">
    <property type="entry name" value="Prot_kinase_dom"/>
</dbReference>
<dbReference type="InterPro" id="IPR017441">
    <property type="entry name" value="Protein_kinase_ATP_BS"/>
</dbReference>
<dbReference type="InterPro" id="IPR008271">
    <property type="entry name" value="Ser/Thr_kinase_AS"/>
</dbReference>
<dbReference type="PANTHER" id="PTHR24349">
    <property type="entry name" value="SERINE/THREONINE-PROTEIN KINASE"/>
    <property type="match status" value="1"/>
</dbReference>
<dbReference type="Pfam" id="PF00069">
    <property type="entry name" value="Pkinase"/>
    <property type="match status" value="1"/>
</dbReference>
<dbReference type="SMART" id="SM00220">
    <property type="entry name" value="S_TKc"/>
    <property type="match status" value="1"/>
</dbReference>
<dbReference type="SUPFAM" id="SSF47473">
    <property type="entry name" value="EF-hand"/>
    <property type="match status" value="1"/>
</dbReference>
<dbReference type="SUPFAM" id="SSF56112">
    <property type="entry name" value="Protein kinase-like (PK-like)"/>
    <property type="match status" value="1"/>
</dbReference>
<dbReference type="PROSITE" id="PS00107">
    <property type="entry name" value="PROTEIN_KINASE_ATP"/>
    <property type="match status" value="1"/>
</dbReference>
<dbReference type="PROSITE" id="PS50011">
    <property type="entry name" value="PROTEIN_KINASE_DOM"/>
    <property type="match status" value="1"/>
</dbReference>
<dbReference type="PROSITE" id="PS00108">
    <property type="entry name" value="PROTEIN_KINASE_ST"/>
    <property type="match status" value="1"/>
</dbReference>
<organism>
    <name type="scientific">Daucus carota</name>
    <name type="common">Wild carrot</name>
    <dbReference type="NCBI Taxonomy" id="4039"/>
    <lineage>
        <taxon>Eukaryota</taxon>
        <taxon>Viridiplantae</taxon>
        <taxon>Streptophyta</taxon>
        <taxon>Embryophyta</taxon>
        <taxon>Tracheophyta</taxon>
        <taxon>Spermatophyta</taxon>
        <taxon>Magnoliopsida</taxon>
        <taxon>eudicotyledons</taxon>
        <taxon>Gunneridae</taxon>
        <taxon>Pentapetalae</taxon>
        <taxon>asterids</taxon>
        <taxon>campanulids</taxon>
        <taxon>Apiales</taxon>
        <taxon>Apiaceae</taxon>
        <taxon>Apioideae</taxon>
        <taxon>Scandiceae</taxon>
        <taxon>Daucinae</taxon>
        <taxon>Daucus</taxon>
        <taxon>Daucus sect. Daucus</taxon>
    </lineage>
</organism>
<feature type="chain" id="PRO_0000085880" description="CDPK-related protein kinase">
    <location>
        <begin position="1"/>
        <end position="602"/>
    </location>
</feature>
<feature type="repeat" description="1">
    <location>
        <begin position="20"/>
        <end position="26"/>
    </location>
</feature>
<feature type="repeat" description="2">
    <location>
        <begin position="27"/>
        <end position="33"/>
    </location>
</feature>
<feature type="repeat" description="3">
    <location>
        <begin position="34"/>
        <end position="40"/>
    </location>
</feature>
<feature type="domain" description="Protein kinase" evidence="1">
    <location>
        <begin position="148"/>
        <end position="410"/>
    </location>
</feature>
<feature type="domain" description="EF-hand 1">
    <location>
        <begin position="451"/>
        <end position="486"/>
    </location>
</feature>
<feature type="domain" description="EF-hand 2">
    <location>
        <begin position="487"/>
        <end position="527"/>
    </location>
</feature>
<feature type="domain" description="EF-hand 3">
    <location>
        <begin position="528"/>
        <end position="563"/>
    </location>
</feature>
<feature type="domain" description="EF-hand 4">
    <location>
        <begin position="564"/>
        <end position="602"/>
    </location>
</feature>
<feature type="region of interest" description="Disordered" evidence="3">
    <location>
        <begin position="1"/>
        <end position="59"/>
    </location>
</feature>
<feature type="region of interest" description="3 X 7 AA tandem repeats of S-[LI]-P-X-X-D-X">
    <location>
        <begin position="20"/>
        <end position="40"/>
    </location>
</feature>
<feature type="compositionally biased region" description="Polar residues" evidence="3">
    <location>
        <begin position="19"/>
        <end position="34"/>
    </location>
</feature>
<feature type="active site" description="Proton acceptor" evidence="1 2">
    <location>
        <position position="276"/>
    </location>
</feature>
<feature type="binding site" evidence="1">
    <location>
        <begin position="154"/>
        <end position="162"/>
    </location>
    <ligand>
        <name>ATP</name>
        <dbReference type="ChEBI" id="CHEBI:30616"/>
    </ligand>
</feature>
<feature type="binding site" evidence="1">
    <location>
        <position position="180"/>
    </location>
    <ligand>
        <name>ATP</name>
        <dbReference type="ChEBI" id="CHEBI:30616"/>
    </ligand>
</feature>